<protein>
    <recommendedName>
        <fullName>Unknown protein</fullName>
    </recommendedName>
</protein>
<sequence length="15" mass="1652">ADPPVVGXYEYATCR</sequence>
<organism evidence="1">
    <name type="scientific">Metarhizium anisopliae</name>
    <name type="common">Entomophthora anisopliae</name>
    <dbReference type="NCBI Taxonomy" id="5530"/>
    <lineage>
        <taxon>Eukaryota</taxon>
        <taxon>Fungi</taxon>
        <taxon>Dikarya</taxon>
        <taxon>Ascomycota</taxon>
        <taxon>Pezizomycotina</taxon>
        <taxon>Sordariomycetes</taxon>
        <taxon>Hypocreomycetidae</taxon>
        <taxon>Hypocreales</taxon>
        <taxon>Clavicipitaceae</taxon>
        <taxon>Metarhizium</taxon>
    </lineage>
</organism>
<proteinExistence type="evidence at protein level"/>
<reference key="1">
    <citation type="journal article" date="2002" name="Can. J. Microbiol.">
        <title>Protein analysis in a pleomorphically deteriorated strain of the insect-pathogenic fungus Metarhizium anisopliae.</title>
        <authorList>
            <person name="Kamp A.M."/>
            <person name="Bidochka M.J."/>
        </authorList>
    </citation>
    <scope>PROTEIN SEQUENCE</scope>
    <source>
        <strain>54A-1b</strain>
    </source>
</reference>
<evidence type="ECO:0000305" key="1"/>
<feature type="chain" id="PRO_0000055561" description="Unknown protein">
    <location>
        <begin position="1"/>
        <end position="15" status="greater than"/>
    </location>
</feature>
<feature type="non-terminal residue" evidence="1">
    <location>
        <position position="15"/>
    </location>
</feature>
<keyword id="KW-0903">Direct protein sequencing</keyword>
<accession>P83440</accession>
<name>UP01_METAN</name>